<organism>
    <name type="scientific">Agkistrodon piscivorus piscivorus</name>
    <name type="common">Eastern cottonmouth</name>
    <dbReference type="NCBI Taxonomy" id="8716"/>
    <lineage>
        <taxon>Eukaryota</taxon>
        <taxon>Metazoa</taxon>
        <taxon>Chordata</taxon>
        <taxon>Craniata</taxon>
        <taxon>Vertebrata</taxon>
        <taxon>Euteleostomi</taxon>
        <taxon>Lepidosauria</taxon>
        <taxon>Squamata</taxon>
        <taxon>Bifurcata</taxon>
        <taxon>Unidentata</taxon>
        <taxon>Episquamata</taxon>
        <taxon>Toxicofera</taxon>
        <taxon>Serpentes</taxon>
        <taxon>Colubroidea</taxon>
        <taxon>Viperidae</taxon>
        <taxon>Crotalinae</taxon>
        <taxon>Agkistrodon</taxon>
    </lineage>
</organism>
<dbReference type="GO" id="GO:0005576">
    <property type="term" value="C:extracellular region"/>
    <property type="evidence" value="ECO:0007669"/>
    <property type="project" value="UniProtKB-SubCell"/>
</dbReference>
<dbReference type="GO" id="GO:0030414">
    <property type="term" value="F:peptidase inhibitor activity"/>
    <property type="evidence" value="ECO:0007669"/>
    <property type="project" value="UniProtKB-KW"/>
</dbReference>
<dbReference type="GO" id="GO:0008217">
    <property type="term" value="P:regulation of blood pressure"/>
    <property type="evidence" value="ECO:0007669"/>
    <property type="project" value="UniProtKB-KW"/>
</dbReference>
<proteinExistence type="evidence at protein level"/>
<protein>
    <recommendedName>
        <fullName>Bradykinin-potentiating peptide F</fullName>
        <shortName>AppF</shortName>
        <shortName>BPP-F</shortName>
    </recommendedName>
</protein>
<feature type="peptide" id="PRO_0000343180" description="Bradykinin-potentiating peptide F">
    <location>
        <begin position="1"/>
        <end position="10"/>
    </location>
</feature>
<feature type="modified residue" description="Pyrrolidone carboxylic acid" evidence="1">
    <location>
        <position position="1"/>
    </location>
</feature>
<reference key="1">
    <citation type="journal article" date="1995" name="Toxicon">
        <title>Structure and effects of a kinin potentiating fraction F (AppF) isolated from Agkistrodon piscivorus piscivorus venom.</title>
        <authorList>
            <person name="Ferreira L.A.F."/>
            <person name="Moellring T."/>
            <person name="Lebrun F.L.A.S."/>
            <person name="Raida M."/>
            <person name="Znottka R."/>
            <person name="Habermehl G.G."/>
        </authorList>
    </citation>
    <scope>PROTEIN SEQUENCE</scope>
    <scope>FUNCTION</scope>
    <scope>SUBCELLULAR LOCATION</scope>
    <scope>TISSUE SPECIFICITY</scope>
    <scope>MASS SPECTROMETRY</scope>
    <scope>PYROGLUTAMATE FORMATION AT GLN-1</scope>
</reference>
<reference key="2">
    <citation type="journal article" date="1999" name="Toxicon">
        <title>Spatial structures of the bradykinin potentiating peptide F from Agkistrodon piscivorus piscivoris venom.</title>
        <authorList>
            <person name="Ferreira L.A.F."/>
            <person name="Auer H."/>
            <person name="Haslinger E."/>
            <person name="Fedele C."/>
            <person name="Habermehl G.G."/>
        </authorList>
    </citation>
    <scope>SYNTHESIS</scope>
    <scope>STRUCTURE BY NMR</scope>
</reference>
<accession>P0C7R6</accession>
<comment type="function">
    <text evidence="1">This peptide potentiates the effect of bradykinin on the isolated guinea-pig ileum, does not potentiate the effects of bradykinin upon blood pressure and inhibits the angiotensin-converting enzyme (ACE) from rat plasma.</text>
</comment>
<comment type="subcellular location">
    <subcellularLocation>
        <location evidence="1">Secreted</location>
    </subcellularLocation>
</comment>
<comment type="tissue specificity">
    <text evidence="1">Expressed by the venom gland.</text>
</comment>
<comment type="mass spectrometry" mass="1224.2" method="Electrospray" evidence="1"/>
<comment type="miscellaneous">
    <text>Exists in two forms, due to cis-trans isomerization at Trp-3-Pro-4.</text>
</comment>
<comment type="similarity">
    <text evidence="2">Belongs to the bradykinin-potentiating peptide family.</text>
</comment>
<evidence type="ECO:0000269" key="1">
    <source>
    </source>
</evidence>
<evidence type="ECO:0000305" key="2"/>
<sequence length="10" mass="1240">QLWPRPHIPP</sequence>
<keyword id="KW-0903">Direct protein sequencing</keyword>
<keyword id="KW-0382">Hypotensive agent</keyword>
<keyword id="KW-0481">Metalloenzyme inhibitor</keyword>
<keyword id="KW-0483">Metalloprotease inhibitor</keyword>
<keyword id="KW-0646">Protease inhibitor</keyword>
<keyword id="KW-0873">Pyrrolidone carboxylic acid</keyword>
<keyword id="KW-0964">Secreted</keyword>
<name>BPPF_AGKPI</name>